<protein>
    <recommendedName>
        <fullName>Vacuolar protein sorting-associated protein 27</fullName>
    </recommendedName>
</protein>
<reference key="1">
    <citation type="journal article" date="2003" name="Nucleic Acids Res.">
        <title>What's in the genome of a filamentous fungus? Analysis of the Neurospora genome sequence.</title>
        <authorList>
            <person name="Mannhaupt G."/>
            <person name="Montrone C."/>
            <person name="Haase D."/>
            <person name="Mewes H.-W."/>
            <person name="Aign V."/>
            <person name="Hoheisel J.D."/>
            <person name="Fartmann B."/>
            <person name="Nyakatura G."/>
            <person name="Kempken F."/>
            <person name="Maier J."/>
            <person name="Schulte U."/>
        </authorList>
    </citation>
    <scope>NUCLEOTIDE SEQUENCE [LARGE SCALE GENOMIC DNA]</scope>
    <source>
        <strain>ATCC 24698 / 74-OR23-1A / CBS 708.71 / DSM 1257 / FGSC 987</strain>
    </source>
</reference>
<reference key="2">
    <citation type="journal article" date="2003" name="Nature">
        <title>The genome sequence of the filamentous fungus Neurospora crassa.</title>
        <authorList>
            <person name="Galagan J.E."/>
            <person name="Calvo S.E."/>
            <person name="Borkovich K.A."/>
            <person name="Selker E.U."/>
            <person name="Read N.D."/>
            <person name="Jaffe D.B."/>
            <person name="FitzHugh W."/>
            <person name="Ma L.-J."/>
            <person name="Smirnov S."/>
            <person name="Purcell S."/>
            <person name="Rehman B."/>
            <person name="Elkins T."/>
            <person name="Engels R."/>
            <person name="Wang S."/>
            <person name="Nielsen C.B."/>
            <person name="Butler J."/>
            <person name="Endrizzi M."/>
            <person name="Qui D."/>
            <person name="Ianakiev P."/>
            <person name="Bell-Pedersen D."/>
            <person name="Nelson M.A."/>
            <person name="Werner-Washburne M."/>
            <person name="Selitrennikoff C.P."/>
            <person name="Kinsey J.A."/>
            <person name="Braun E.L."/>
            <person name="Zelter A."/>
            <person name="Schulte U."/>
            <person name="Kothe G.O."/>
            <person name="Jedd G."/>
            <person name="Mewes H.-W."/>
            <person name="Staben C."/>
            <person name="Marcotte E."/>
            <person name="Greenberg D."/>
            <person name="Roy A."/>
            <person name="Foley K."/>
            <person name="Naylor J."/>
            <person name="Stange-Thomann N."/>
            <person name="Barrett R."/>
            <person name="Gnerre S."/>
            <person name="Kamal M."/>
            <person name="Kamvysselis M."/>
            <person name="Mauceli E.W."/>
            <person name="Bielke C."/>
            <person name="Rudd S."/>
            <person name="Frishman D."/>
            <person name="Krystofova S."/>
            <person name="Rasmussen C."/>
            <person name="Metzenberg R.L."/>
            <person name="Perkins D.D."/>
            <person name="Kroken S."/>
            <person name="Cogoni C."/>
            <person name="Macino G."/>
            <person name="Catcheside D.E.A."/>
            <person name="Li W."/>
            <person name="Pratt R.J."/>
            <person name="Osmani S.A."/>
            <person name="DeSouza C.P.C."/>
            <person name="Glass N.L."/>
            <person name="Orbach M.J."/>
            <person name="Berglund J.A."/>
            <person name="Voelker R."/>
            <person name="Yarden O."/>
            <person name="Plamann M."/>
            <person name="Seiler S."/>
            <person name="Dunlap J.C."/>
            <person name="Radford A."/>
            <person name="Aramayo R."/>
            <person name="Natvig D.O."/>
            <person name="Alex L.A."/>
            <person name="Mannhaupt G."/>
            <person name="Ebbole D.J."/>
            <person name="Freitag M."/>
            <person name="Paulsen I."/>
            <person name="Sachs M.S."/>
            <person name="Lander E.S."/>
            <person name="Nusbaum C."/>
            <person name="Birren B.W."/>
        </authorList>
    </citation>
    <scope>NUCLEOTIDE SEQUENCE [LARGE SCALE GENOMIC DNA]</scope>
    <source>
        <strain>ATCC 24698 / 74-OR23-1A / CBS 708.71 / DSM 1257 / FGSC 987</strain>
    </source>
</reference>
<evidence type="ECO:0000250" key="1"/>
<evidence type="ECO:0000255" key="2">
    <source>
        <dbReference type="PROSITE-ProRule" id="PRU00091"/>
    </source>
</evidence>
<evidence type="ECO:0000255" key="3">
    <source>
        <dbReference type="PROSITE-ProRule" id="PRU00213"/>
    </source>
</evidence>
<evidence type="ECO:0000255" key="4">
    <source>
        <dbReference type="PROSITE-ProRule" id="PRU00218"/>
    </source>
</evidence>
<evidence type="ECO:0000256" key="5">
    <source>
        <dbReference type="SAM" id="MobiDB-lite"/>
    </source>
</evidence>
<evidence type="ECO:0000305" key="6"/>
<feature type="chain" id="PRO_0000292520" description="Vacuolar protein sorting-associated protein 27">
    <location>
        <begin position="1"/>
        <end position="724"/>
    </location>
</feature>
<feature type="domain" description="VHS" evidence="4">
    <location>
        <begin position="18"/>
        <end position="150"/>
    </location>
</feature>
<feature type="domain" description="UIM 1" evidence="3">
    <location>
        <begin position="270"/>
        <end position="289"/>
    </location>
</feature>
<feature type="domain" description="UIM 2" evidence="3">
    <location>
        <begin position="317"/>
        <end position="336"/>
    </location>
</feature>
<feature type="zinc finger region" description="FYVE-type; degenerate" evidence="2">
    <location>
        <begin position="168"/>
        <end position="228"/>
    </location>
</feature>
<feature type="region of interest" description="Disordered" evidence="5">
    <location>
        <begin position="228"/>
        <end position="268"/>
    </location>
</feature>
<feature type="region of interest" description="Disordered" evidence="5">
    <location>
        <begin position="286"/>
        <end position="312"/>
    </location>
</feature>
<feature type="region of interest" description="Disordered" evidence="5">
    <location>
        <begin position="462"/>
        <end position="714"/>
    </location>
</feature>
<feature type="compositionally biased region" description="Basic and acidic residues" evidence="5">
    <location>
        <begin position="228"/>
        <end position="238"/>
    </location>
</feature>
<feature type="compositionally biased region" description="Basic residues" evidence="5">
    <location>
        <begin position="239"/>
        <end position="256"/>
    </location>
</feature>
<feature type="compositionally biased region" description="Polar residues" evidence="5">
    <location>
        <begin position="296"/>
        <end position="312"/>
    </location>
</feature>
<feature type="compositionally biased region" description="Low complexity" evidence="5">
    <location>
        <begin position="566"/>
        <end position="581"/>
    </location>
</feature>
<feature type="compositionally biased region" description="Low complexity" evidence="5">
    <location>
        <begin position="602"/>
        <end position="619"/>
    </location>
</feature>
<feature type="compositionally biased region" description="Polar residues" evidence="5">
    <location>
        <begin position="625"/>
        <end position="640"/>
    </location>
</feature>
<feature type="compositionally biased region" description="Low complexity" evidence="5">
    <location>
        <begin position="641"/>
        <end position="658"/>
    </location>
</feature>
<feature type="compositionally biased region" description="Polar residues" evidence="5">
    <location>
        <begin position="670"/>
        <end position="679"/>
    </location>
</feature>
<proteinExistence type="inferred from homology"/>
<dbReference type="EMBL" id="BX295540">
    <property type="protein sequence ID" value="CAD79688.1"/>
    <property type="molecule type" value="Genomic_DNA"/>
</dbReference>
<dbReference type="EMBL" id="CM002241">
    <property type="protein sequence ID" value="EAA28394.3"/>
    <property type="molecule type" value="Genomic_DNA"/>
</dbReference>
<dbReference type="RefSeq" id="XP_957630.3">
    <property type="nucleotide sequence ID" value="XM_952537.3"/>
</dbReference>
<dbReference type="SMR" id="Q7RZJ2"/>
<dbReference type="FunCoup" id="Q7RZJ2">
    <property type="interactions" value="103"/>
</dbReference>
<dbReference type="STRING" id="367110.Q7RZJ2"/>
<dbReference type="EnsemblFungi" id="EAA28394">
    <property type="protein sequence ID" value="EAA28394"/>
    <property type="gene ID" value="NCU04015"/>
</dbReference>
<dbReference type="GeneID" id="3873817"/>
<dbReference type="KEGG" id="ncr:NCU04015"/>
<dbReference type="VEuPathDB" id="FungiDB:NCU04015"/>
<dbReference type="HOGENOM" id="CLU_011862_1_0_1"/>
<dbReference type="InParanoid" id="Q7RZJ2"/>
<dbReference type="OrthoDB" id="957735at2759"/>
<dbReference type="Proteomes" id="UP000001805">
    <property type="component" value="Chromosome 5, Linkage Group VI"/>
</dbReference>
<dbReference type="GO" id="GO:0010008">
    <property type="term" value="C:endosome membrane"/>
    <property type="evidence" value="ECO:0007669"/>
    <property type="project" value="UniProtKB-SubCell"/>
</dbReference>
<dbReference type="GO" id="GO:0033565">
    <property type="term" value="C:ESCRT-0 complex"/>
    <property type="evidence" value="ECO:0000318"/>
    <property type="project" value="GO_Central"/>
</dbReference>
<dbReference type="GO" id="GO:0032266">
    <property type="term" value="F:phosphatidylinositol-3-phosphate binding"/>
    <property type="evidence" value="ECO:0000318"/>
    <property type="project" value="GO_Central"/>
</dbReference>
<dbReference type="GO" id="GO:0043130">
    <property type="term" value="F:ubiquitin binding"/>
    <property type="evidence" value="ECO:0000318"/>
    <property type="project" value="GO_Central"/>
</dbReference>
<dbReference type="GO" id="GO:0008270">
    <property type="term" value="F:zinc ion binding"/>
    <property type="evidence" value="ECO:0007669"/>
    <property type="project" value="UniProtKB-KW"/>
</dbReference>
<dbReference type="GO" id="GO:0006623">
    <property type="term" value="P:protein targeting to vacuole"/>
    <property type="evidence" value="ECO:0000318"/>
    <property type="project" value="GO_Central"/>
</dbReference>
<dbReference type="GO" id="GO:0043328">
    <property type="term" value="P:protein transport to vacuole involved in ubiquitin-dependent protein catabolic process via the multivesicular body sorting pathway"/>
    <property type="evidence" value="ECO:0000318"/>
    <property type="project" value="GO_Central"/>
</dbReference>
<dbReference type="CDD" id="cd15735">
    <property type="entry name" value="FYVE_spVPS27p_like"/>
    <property type="match status" value="1"/>
</dbReference>
<dbReference type="CDD" id="cd21385">
    <property type="entry name" value="GAT_Vps27"/>
    <property type="match status" value="1"/>
</dbReference>
<dbReference type="CDD" id="cd16979">
    <property type="entry name" value="VHS_Vps27"/>
    <property type="match status" value="1"/>
</dbReference>
<dbReference type="FunFam" id="1.20.5.1940:FF:000001">
    <property type="entry name" value="Vacuolar protein sorting-associated protein 27"/>
    <property type="match status" value="1"/>
</dbReference>
<dbReference type="FunFam" id="1.25.40.90:FF:000031">
    <property type="entry name" value="Vacuolar protein sorting-associated protein 27"/>
    <property type="match status" value="1"/>
</dbReference>
<dbReference type="FunFam" id="3.30.40.10:FF:000161">
    <property type="entry name" value="Vacuolar protein sorting-associated protein 27"/>
    <property type="match status" value="1"/>
</dbReference>
<dbReference type="Gene3D" id="1.20.5.1940">
    <property type="match status" value="1"/>
</dbReference>
<dbReference type="Gene3D" id="1.25.40.90">
    <property type="match status" value="1"/>
</dbReference>
<dbReference type="Gene3D" id="6.10.140.100">
    <property type="match status" value="1"/>
</dbReference>
<dbReference type="Gene3D" id="3.30.40.10">
    <property type="entry name" value="Zinc/RING finger domain, C3HC4 (zinc finger)"/>
    <property type="match status" value="1"/>
</dbReference>
<dbReference type="InterPro" id="IPR008942">
    <property type="entry name" value="ENTH_VHS"/>
</dbReference>
<dbReference type="InterPro" id="IPR017073">
    <property type="entry name" value="HGS/VPS27"/>
</dbReference>
<dbReference type="InterPro" id="IPR003903">
    <property type="entry name" value="UIM_dom"/>
</dbReference>
<dbReference type="InterPro" id="IPR002014">
    <property type="entry name" value="VHS_dom"/>
</dbReference>
<dbReference type="InterPro" id="IPR049425">
    <property type="entry name" value="Vps27_GAT-like"/>
</dbReference>
<dbReference type="InterPro" id="IPR000306">
    <property type="entry name" value="Znf_FYVE"/>
</dbReference>
<dbReference type="InterPro" id="IPR017455">
    <property type="entry name" value="Znf_FYVE-rel"/>
</dbReference>
<dbReference type="InterPro" id="IPR011011">
    <property type="entry name" value="Znf_FYVE_PHD"/>
</dbReference>
<dbReference type="InterPro" id="IPR013083">
    <property type="entry name" value="Znf_RING/FYVE/PHD"/>
</dbReference>
<dbReference type="PANTHER" id="PTHR47794">
    <property type="entry name" value="VACUOLAR PROTEIN SORTING-ASSOCIATED PROTEIN 27"/>
    <property type="match status" value="1"/>
</dbReference>
<dbReference type="PANTHER" id="PTHR47794:SF1">
    <property type="entry name" value="VACUOLAR PROTEIN SORTING-ASSOCIATED PROTEIN 27"/>
    <property type="match status" value="1"/>
</dbReference>
<dbReference type="Pfam" id="PF01363">
    <property type="entry name" value="FYVE"/>
    <property type="match status" value="1"/>
</dbReference>
<dbReference type="Pfam" id="PF02809">
    <property type="entry name" value="UIM"/>
    <property type="match status" value="2"/>
</dbReference>
<dbReference type="Pfam" id="PF00790">
    <property type="entry name" value="VHS"/>
    <property type="match status" value="1"/>
</dbReference>
<dbReference type="Pfam" id="PF21356">
    <property type="entry name" value="Vps27_GAT-like"/>
    <property type="match status" value="1"/>
</dbReference>
<dbReference type="PIRSF" id="PIRSF036956">
    <property type="entry name" value="Hrs_Vps27"/>
    <property type="match status" value="1"/>
</dbReference>
<dbReference type="SMART" id="SM00064">
    <property type="entry name" value="FYVE"/>
    <property type="match status" value="1"/>
</dbReference>
<dbReference type="SMART" id="SM00726">
    <property type="entry name" value="UIM"/>
    <property type="match status" value="2"/>
</dbReference>
<dbReference type="SMART" id="SM00288">
    <property type="entry name" value="VHS"/>
    <property type="match status" value="1"/>
</dbReference>
<dbReference type="SUPFAM" id="SSF48464">
    <property type="entry name" value="ENTH/VHS domain"/>
    <property type="match status" value="1"/>
</dbReference>
<dbReference type="SUPFAM" id="SSF57903">
    <property type="entry name" value="FYVE/PHD zinc finger"/>
    <property type="match status" value="1"/>
</dbReference>
<dbReference type="PROSITE" id="PS50330">
    <property type="entry name" value="UIM"/>
    <property type="match status" value="1"/>
</dbReference>
<dbReference type="PROSITE" id="PS50179">
    <property type="entry name" value="VHS"/>
    <property type="match status" value="1"/>
</dbReference>
<dbReference type="PROSITE" id="PS50178">
    <property type="entry name" value="ZF_FYVE"/>
    <property type="match status" value="1"/>
</dbReference>
<gene>
    <name type="primary">vps27</name>
    <name type="ORF">49D12.130</name>
    <name type="ORF">NCU04015</name>
</gene>
<name>VPS27_NEUCR</name>
<comment type="function">
    <text evidence="1">Component of the ESCRT-0 complex which is the sorting receptor for ubiquitinated cargo proteins at the multivesicular body (MVB) and recruits ESCRT-I to the MVB outer membrane.</text>
</comment>
<comment type="subunit">
    <text>Component of the ESCRT-0 complex composed of hse1 and vps27.</text>
</comment>
<comment type="subcellular location">
    <subcellularLocation>
        <location evidence="1">Endosome membrane</location>
        <topology evidence="1">Peripheral membrane protein</topology>
        <orientation evidence="1">Cytoplasmic side</orientation>
    </subcellularLocation>
</comment>
<comment type="domain">
    <text>The FYVE domain is involved in the binding to phosphatidylinositol 3-phosphate (PtdIns(3)P) which is required for the association to endosomal membranes.</text>
</comment>
<comment type="domain">
    <text evidence="1">Both IUM domains are necessary for efficient binding to ubiquitin.</text>
</comment>
<comment type="similarity">
    <text evidence="6">Belongs to the VPS27 family.</text>
</comment>
<accession>Q7RZJ2</accession>
<accession>Q870P0</accession>
<sequence length="724" mass="79747">MMSWWSSGANTALDEQIEKATSSSLEDIALNLEISDVIRSKTVQPKEAMRSLKKRINHKNPNTQLSALNLTDTCVKNGGAHFLAEIASREFMENLVGLLKAVGPAAPNPDVRNKILDLIQSWAMAAEGRYELSYIGEVYKTLQREGYSFPPKPTVASSMIDSSAPPEWVDSDVCMRCRTAFTFTNRKHHCRNCGNCFDQQCSSKSLPLPHLGIMQAVRVDDGCYAKLTDKGGKSGGSDRKHHSSSRHHHHHHKHKSSSSMQPRDARVDDSFDEDLKRALAMSLEEVKSYSRGHSEPANSTQYKPDKQSTSVSKIAEEEDEDLKAAIAASLADMEEQKKRHAAALKEQTSNVGSSSSAAPFTLPKNDYELTPVEAENINLFATLVDRLQTQPPGTILREPQIQELYDSIGALRPKLARTYGETMSKHDTLLDLHAKLSTVVRYYDRMLEERLSKAYGQHSIGGYNLPAPRQPTGPYPTLDPSAPSAPGAAENFYTGEQQADYSHAPYGQYPPQPPQSQYMPYDRRSSMVGPPNPQYPQQQMPQRTGSWGNAPPAQAPQYNYSGNEVAPSQPGHAQQAQPGAPESAPGAPNNDPNASYYYNPGQPQQQQQQSAQQAPAAAPDHSYPTLPQQGHSYQPSVPQTPASVPVQPSQTPQQAHQRVPPPQQAPQQPYWQHSAAQQTPLPPVWQAPQQTTTYPGYDQEAFPSAPQHAPAPKQPVVEEALIEL</sequence>
<keyword id="KW-0967">Endosome</keyword>
<keyword id="KW-0472">Membrane</keyword>
<keyword id="KW-0479">Metal-binding</keyword>
<keyword id="KW-1185">Reference proteome</keyword>
<keyword id="KW-0677">Repeat</keyword>
<keyword id="KW-0862">Zinc</keyword>
<keyword id="KW-0863">Zinc-finger</keyword>
<organism>
    <name type="scientific">Neurospora crassa (strain ATCC 24698 / 74-OR23-1A / CBS 708.71 / DSM 1257 / FGSC 987)</name>
    <dbReference type="NCBI Taxonomy" id="367110"/>
    <lineage>
        <taxon>Eukaryota</taxon>
        <taxon>Fungi</taxon>
        <taxon>Dikarya</taxon>
        <taxon>Ascomycota</taxon>
        <taxon>Pezizomycotina</taxon>
        <taxon>Sordariomycetes</taxon>
        <taxon>Sordariomycetidae</taxon>
        <taxon>Sordariales</taxon>
        <taxon>Sordariaceae</taxon>
        <taxon>Neurospora</taxon>
    </lineage>
</organism>